<comment type="function">
    <text evidence="1">Catalyzes the stereoinversion of LL-2,6-diaminopimelate (L,L-DAP) to meso-diaminopimelate (meso-DAP), a precursor of L-lysine and an essential component of the bacterial peptidoglycan.</text>
</comment>
<comment type="catalytic activity">
    <reaction evidence="1">
        <text>(2S,6S)-2,6-diaminopimelate = meso-2,6-diaminopimelate</text>
        <dbReference type="Rhea" id="RHEA:15393"/>
        <dbReference type="ChEBI" id="CHEBI:57609"/>
        <dbReference type="ChEBI" id="CHEBI:57791"/>
        <dbReference type="EC" id="5.1.1.7"/>
    </reaction>
</comment>
<comment type="pathway">
    <text evidence="1">Amino-acid biosynthesis; L-lysine biosynthesis via DAP pathway; DL-2,6-diaminopimelate from LL-2,6-diaminopimelate: step 1/1.</text>
</comment>
<comment type="subunit">
    <text evidence="1">Homodimer.</text>
</comment>
<comment type="subcellular location">
    <subcellularLocation>
        <location evidence="1">Cytoplasm</location>
    </subcellularLocation>
</comment>
<comment type="similarity">
    <text evidence="1">Belongs to the diaminopimelate epimerase family.</text>
</comment>
<keyword id="KW-0028">Amino-acid biosynthesis</keyword>
<keyword id="KW-0963">Cytoplasm</keyword>
<keyword id="KW-0413">Isomerase</keyword>
<keyword id="KW-0457">Lysine biosynthesis</keyword>
<organism>
    <name type="scientific">Edwardsiella ictaluri (strain 93-146)</name>
    <dbReference type="NCBI Taxonomy" id="634503"/>
    <lineage>
        <taxon>Bacteria</taxon>
        <taxon>Pseudomonadati</taxon>
        <taxon>Pseudomonadota</taxon>
        <taxon>Gammaproteobacteria</taxon>
        <taxon>Enterobacterales</taxon>
        <taxon>Hafniaceae</taxon>
        <taxon>Edwardsiella</taxon>
    </lineage>
</organism>
<name>DAPF_EDWI9</name>
<feature type="chain" id="PRO_1000204059" description="Diaminopimelate epimerase">
    <location>
        <begin position="1"/>
        <end position="274"/>
    </location>
</feature>
<feature type="active site" description="Proton donor" evidence="1">
    <location>
        <position position="73"/>
    </location>
</feature>
<feature type="active site" description="Proton acceptor" evidence="1">
    <location>
        <position position="217"/>
    </location>
</feature>
<feature type="binding site" evidence="1">
    <location>
        <position position="11"/>
    </location>
    <ligand>
        <name>substrate</name>
    </ligand>
</feature>
<feature type="binding site" evidence="1">
    <location>
        <position position="44"/>
    </location>
    <ligand>
        <name>substrate</name>
    </ligand>
</feature>
<feature type="binding site" evidence="1">
    <location>
        <position position="64"/>
    </location>
    <ligand>
        <name>substrate</name>
    </ligand>
</feature>
<feature type="binding site" evidence="1">
    <location>
        <begin position="74"/>
        <end position="75"/>
    </location>
    <ligand>
        <name>substrate</name>
    </ligand>
</feature>
<feature type="binding site" evidence="1">
    <location>
        <position position="157"/>
    </location>
    <ligand>
        <name>substrate</name>
    </ligand>
</feature>
<feature type="binding site" evidence="1">
    <location>
        <position position="190"/>
    </location>
    <ligand>
        <name>substrate</name>
    </ligand>
</feature>
<feature type="binding site" evidence="1">
    <location>
        <begin position="208"/>
        <end position="209"/>
    </location>
    <ligand>
        <name>substrate</name>
    </ligand>
</feature>
<feature type="binding site" evidence="1">
    <location>
        <begin position="218"/>
        <end position="219"/>
    </location>
    <ligand>
        <name>substrate</name>
    </ligand>
</feature>
<feature type="site" description="Could be important to modulate the pK values of the two catalytic cysteine residues" evidence="1">
    <location>
        <position position="159"/>
    </location>
</feature>
<feature type="site" description="Could be important to modulate the pK values of the two catalytic cysteine residues" evidence="1">
    <location>
        <position position="208"/>
    </location>
</feature>
<feature type="site" description="Important for dimerization" evidence="1">
    <location>
        <position position="268"/>
    </location>
</feature>
<proteinExistence type="inferred from homology"/>
<protein>
    <recommendedName>
        <fullName evidence="1">Diaminopimelate epimerase</fullName>
        <shortName evidence="1">DAP epimerase</shortName>
        <ecNumber evidence="1">5.1.1.7</ecNumber>
    </recommendedName>
    <alternativeName>
        <fullName evidence="1">PLP-independent amino acid racemase</fullName>
    </alternativeName>
</protein>
<reference key="1">
    <citation type="submission" date="2009-03" db="EMBL/GenBank/DDBJ databases">
        <title>Complete genome sequence of Edwardsiella ictaluri 93-146.</title>
        <authorList>
            <person name="Williams M.L."/>
            <person name="Gillaspy A.F."/>
            <person name="Dyer D.W."/>
            <person name="Thune R.L."/>
            <person name="Waldbieser G.C."/>
            <person name="Schuster S.C."/>
            <person name="Gipson J."/>
            <person name="Zaitshik J."/>
            <person name="Landry C."/>
            <person name="Lawrence M.L."/>
        </authorList>
    </citation>
    <scope>NUCLEOTIDE SEQUENCE [LARGE SCALE GENOMIC DNA]</scope>
    <source>
        <strain>93-146</strain>
    </source>
</reference>
<dbReference type="EC" id="5.1.1.7" evidence="1"/>
<dbReference type="EMBL" id="CP001600">
    <property type="protein sequence ID" value="ACR67369.1"/>
    <property type="molecule type" value="Genomic_DNA"/>
</dbReference>
<dbReference type="RefSeq" id="WP_015869588.1">
    <property type="nucleotide sequence ID" value="NZ_CP169062.1"/>
</dbReference>
<dbReference type="SMR" id="C5BBD4"/>
<dbReference type="STRING" id="67780.B6E78_11725"/>
<dbReference type="GeneID" id="69537222"/>
<dbReference type="KEGG" id="eic:NT01EI_0114"/>
<dbReference type="PATRIC" id="fig|634503.3.peg.103"/>
<dbReference type="HOGENOM" id="CLU_053306_1_1_6"/>
<dbReference type="OrthoDB" id="9805408at2"/>
<dbReference type="UniPathway" id="UPA00034">
    <property type="reaction ID" value="UER00025"/>
</dbReference>
<dbReference type="Proteomes" id="UP000001485">
    <property type="component" value="Chromosome"/>
</dbReference>
<dbReference type="GO" id="GO:0005829">
    <property type="term" value="C:cytosol"/>
    <property type="evidence" value="ECO:0007669"/>
    <property type="project" value="TreeGrafter"/>
</dbReference>
<dbReference type="GO" id="GO:0008837">
    <property type="term" value="F:diaminopimelate epimerase activity"/>
    <property type="evidence" value="ECO:0007669"/>
    <property type="project" value="UniProtKB-UniRule"/>
</dbReference>
<dbReference type="GO" id="GO:0009089">
    <property type="term" value="P:lysine biosynthetic process via diaminopimelate"/>
    <property type="evidence" value="ECO:0007669"/>
    <property type="project" value="UniProtKB-UniRule"/>
</dbReference>
<dbReference type="FunFam" id="3.10.310.10:FF:000001">
    <property type="entry name" value="Diaminopimelate epimerase"/>
    <property type="match status" value="1"/>
</dbReference>
<dbReference type="FunFam" id="3.10.310.10:FF:000002">
    <property type="entry name" value="Diaminopimelate epimerase"/>
    <property type="match status" value="1"/>
</dbReference>
<dbReference type="Gene3D" id="3.10.310.10">
    <property type="entry name" value="Diaminopimelate Epimerase, Chain A, domain 1"/>
    <property type="match status" value="2"/>
</dbReference>
<dbReference type="HAMAP" id="MF_00197">
    <property type="entry name" value="DAP_epimerase"/>
    <property type="match status" value="1"/>
</dbReference>
<dbReference type="InterPro" id="IPR018510">
    <property type="entry name" value="DAP_epimerase_AS"/>
</dbReference>
<dbReference type="InterPro" id="IPR001653">
    <property type="entry name" value="DAP_epimerase_DapF"/>
</dbReference>
<dbReference type="NCBIfam" id="TIGR00652">
    <property type="entry name" value="DapF"/>
    <property type="match status" value="1"/>
</dbReference>
<dbReference type="PANTHER" id="PTHR31689:SF0">
    <property type="entry name" value="DIAMINOPIMELATE EPIMERASE"/>
    <property type="match status" value="1"/>
</dbReference>
<dbReference type="PANTHER" id="PTHR31689">
    <property type="entry name" value="DIAMINOPIMELATE EPIMERASE, CHLOROPLASTIC"/>
    <property type="match status" value="1"/>
</dbReference>
<dbReference type="Pfam" id="PF01678">
    <property type="entry name" value="DAP_epimerase"/>
    <property type="match status" value="2"/>
</dbReference>
<dbReference type="SUPFAM" id="SSF54506">
    <property type="entry name" value="Diaminopimelate epimerase-like"/>
    <property type="match status" value="1"/>
</dbReference>
<dbReference type="PROSITE" id="PS01326">
    <property type="entry name" value="DAP_EPIMERASE"/>
    <property type="match status" value="1"/>
</dbReference>
<gene>
    <name evidence="1" type="primary">dapF</name>
    <name type="ordered locus">NT01EI_0114</name>
</gene>
<evidence type="ECO:0000255" key="1">
    <source>
        <dbReference type="HAMAP-Rule" id="MF_00197"/>
    </source>
</evidence>
<accession>C5BBD4</accession>
<sequence>MQFAKMHGLGNDFMVVDAVTQNVYFSPELIRRLADRHTGVGFDQLLVVEPPYDPDLDFHYRIFNADGSEVAQCGNGARCFARFVRIKGLTNRRDIRVSTQNSRMTLHVGEDDRVTVNMGEPQFEPGRIPFKAAKAEKTYILRVAQQTVLCGAVSMGNPHCVLQVEDISRAQVELLGPSLESHERFPERVNVGFMQVVERSHIRLRVYERGAGETQACGSGACAAVAVGIQQGLLDEQVQVDLPGGTLHIRWPGPGTPLLMTGPAAHVYDGFIHL</sequence>